<gene>
    <name evidence="14" type="primary">Nkx3-1</name>
    <name evidence="12" type="synonym">Nkx-3.1</name>
    <name evidence="1" type="synonym">Nkx3a</name>
</gene>
<keyword id="KW-0217">Developmental protein</keyword>
<keyword id="KW-0238">DNA-binding</keyword>
<keyword id="KW-0371">Homeobox</keyword>
<keyword id="KW-0539">Nucleus</keyword>
<keyword id="KW-1185">Reference proteome</keyword>
<keyword id="KW-0678">Repressor</keyword>
<keyword id="KW-0804">Transcription</keyword>
<keyword id="KW-0805">Transcription regulation</keyword>
<keyword id="KW-0043">Tumor suppressor</keyword>
<keyword id="KW-0832">Ubl conjugation</keyword>
<comment type="function">
    <text evidence="1 4 6 7">Transcription factor, which binds preferentially the consensus sequence 5'-TAAGT[AG]-3' and can behave as a transcriptional repressor (By similarity). Plays an important role in normal prostate development, regulating proliferation of glandular epithelium and in the formation of ducts in prostate (PubMed:10215624). Acts as a tumor suppressor controlling prostate carcinogenesis, as shown by the ability to suppress growth and tumorigenicity of prostate carcinoma cells (PubMed:12036903). Plays a role in the formation of minor salivary glands (particularly palatine and lingual glands) (PubMed:10906459).</text>
</comment>
<comment type="subunit">
    <text evidence="1 8 9">Interacts with serum response factor (SRF) (PubMed:16814806). Interacts with SPDEF. Interacts with WDR77. Interacts with TOPORS which polyubiquitinates NKX3-1 and induces its proteasomal degradation (By similarity). Interacts with FEM1B (PubMed:18816836).</text>
</comment>
<comment type="subcellular location">
    <subcellularLocation>
        <location evidence="2">Nucleus</location>
    </subcellularLocation>
</comment>
<comment type="tissue specificity">
    <text evidence="4 10 11">Expressed mostly in the male urogenital tract, with highest expression in the epithelial cells lining the ducts of anterior, dorsolateral and ventral prostate and in the bulbourethral gland, and much lower in the seminal vesicle and the testis (PubMed:10215624, PubMed:8943214, PubMed:9142502). Expression in the prostate increases during sexual maturation and is drastically reduced following castration. Expressed also in brain (hippocampus and external granular layer of the cerebral cortex), kidney (intralobular arteries), thymus and adrenal and salivary glands (PubMed:8943214, PubMed:9142502).</text>
</comment>
<comment type="developmental stage">
    <text evidence="5">Early marker of the sclerotome and of a subset of vascular smooth muscle cells, expressed also in outgrowths of epithelial cells, in ectodermal epithelial cells and in restricted regions of the central nervous system. Detected first at 7.5 dpc in the paraxial mesoderm adjacent to the neural fold. At 8.5 dpc, segmental expression in the first 8 or 9 somites. Expression proceeds caudally in parallel with somite maturation and is restricted to the sclerotome. As the somites mature, expression moves away from the axial structures, becomes transiently restricted to a subset of early myotomal cells at the dorsal medial lip and is subsequently down-regulated. At 10.5 dpc, expressed only in the most caudal immature somites. At 9.5 dpc, present in the dorsal aorta. At 11.5 dpc, restricted to the vascular smooth muscle cells of caudal region of the dorsal aorta. At 12.5 dpc, expressed in the distal epithelium of the tongue and in Rathke pouch (anterior pituitary). By 13.5 dpc, also detected in tooth buds. Expression in the abdominal aorta continues through 11.5 to 15.5 dpc. Detected in the vertebral vessels at 12.5 dpc, in the carotid vessel at 13.5 dpc and in arcuate and interlobular arteries of the kidney at 15.5 dpc. In neonates, present in palatine glands, epithelial root sheath of the tooth and epithelial hair sheath. In the nervous system of neonates, expressed in the olfactory lobe, olfactory epithelial cells and cerebellar cortex. Expressed in the male urogenital system during late embryogenesis: at day 14.5, expressed in the outbuddings of the pelvic region of the urogenital sinus, and, at lower levels, in the prospective urethra. Expression is confined to the epithelial cells that are invaginating into the surrounding mesenchyme, with highest levels at the leading edge. At 17.5 dpc, present in the developing ventral, dorsolateral and anterior prostatic buds, in the nascent bulbourethral glands, as well as in the epithelial ducts that join the glands to the prospective urethra. During postnatal growth and morphogenesis of the prostate, high expression is maintain at sites of ductal outgrowth and branching. In the developing testis, detected at 14.5 and 17.5 dpc in the medullary cords, which form seminiferous tubules.</text>
</comment>
<comment type="induction">
    <text evidence="6 10">By androgens (PubMed:8943214). During embryonic development, induced and maintained by sonic hedgehog in pre-somitic mesoderm, in immature somites and in urogenital sinus, but not in the other expression domains (PubMed:10906459).</text>
</comment>
<comment type="PTM">
    <text evidence="1">Ubiquitinated by TOPORS; monoubiquitinated at several residues and also polyubiquitinated on single residues.</text>
</comment>
<comment type="disruption phenotype">
    <text evidence="4 6">Defects in prostate ductal morphogenesis and secretory protein production (PubMed:10215624, PubMed:10906459). The bulbourethral gland displays prostatic epithelial hyperplasia, which increases in severity with age (PubMed:10215624, PubMed:10906459). Mice also display morphogenetic defects of minor salivary glands, which are reduced in size and exhibit severely altered duct morphology (PubMed:10906459).</text>
</comment>
<comment type="similarity">
    <text evidence="13">Belongs to the NK-3 homeobox family.</text>
</comment>
<protein>
    <recommendedName>
        <fullName evidence="12">Homeobox protein Nkx-3.1</fullName>
    </recommendedName>
    <alternativeName>
        <fullName evidence="1">Homeobox protein NK-3 homolog A</fullName>
    </alternativeName>
</protein>
<reference key="1">
    <citation type="journal article" date="1996" name="J. Biol. Chem.">
        <title>Prostate-specific and androgen-dependent expression of a novel homeobox gene.</title>
        <authorList>
            <person name="Bieberich C.J."/>
            <person name="Fujita K."/>
            <person name="He W.-W."/>
            <person name="Jay G."/>
        </authorList>
    </citation>
    <scope>NUCLEOTIDE SEQUENCE [MRNA]</scope>
    <scope>TISSUE SPECIFICITY</scope>
    <scope>INDUCTION</scope>
    <source>
        <tissue>Prostate</tissue>
    </source>
</reference>
<reference key="2">
    <citation type="journal article" date="1997" name="Dev. Dyn.">
        <title>Tissue-specific expression of murine Nkx3.1 in the male urogenital system.</title>
        <authorList>
            <person name="Sciavolino P.J."/>
            <person name="Abrams E.W."/>
            <person name="Yang L."/>
            <person name="Austenberg L.P."/>
            <person name="Shen M.M."/>
            <person name="Abate-Shen C."/>
        </authorList>
    </citation>
    <scope>NUCLEOTIDE SEQUENCE [MRNA]</scope>
    <scope>TISSUE SPECIFICITY</scope>
    <source>
        <strain>Swiss Webster</strain>
        <tissue>Embryo</tissue>
    </source>
</reference>
<reference key="3">
    <citation type="journal article" date="1999" name="Genes Dev.">
        <title>Roles for Nkx3.1 in prostate development and cancer.</title>
        <authorList>
            <person name="Bhatia-Gaur R."/>
            <person name="Donjacour A.A."/>
            <person name="Sciavolino P.J."/>
            <person name="Kim M."/>
            <person name="Desai N."/>
            <person name="Young P."/>
            <person name="Norton C.R."/>
            <person name="Gridley T."/>
            <person name="Cardiff R.D."/>
            <person name="Cunha G.R."/>
            <person name="Abate-Shen C."/>
            <person name="Shen M.M."/>
        </authorList>
    </citation>
    <scope>FUNCTION</scope>
    <scope>TISSUE SPECIFICITY</scope>
    <scope>DISRUPTION PHENOTYPE</scope>
</reference>
<reference key="4">
    <citation type="journal article" date="1999" name="Mech. Dev.">
        <title>Expression of the Nkx3.1 homobox gene during pre and postnatal development.</title>
        <authorList>
            <person name="Tanaka M."/>
            <person name="Lyons G.E."/>
            <person name="Izumo S."/>
        </authorList>
    </citation>
    <scope>DEVELOPMENTAL STAGE</scope>
</reference>
<reference key="5">
    <citation type="journal article" date="2000" name="Mech. Dev.">
        <title>Targeted disruption of the Nkx3.1 gene in mice results in morphogenetic defects of minor salivary glands: parallels to glandular duct morphogenesis in prostate.</title>
        <authorList>
            <person name="Schneider A."/>
            <person name="Brand T."/>
            <person name="Zweigerdt R."/>
            <person name="Arnold H."/>
        </authorList>
    </citation>
    <scope>DISRUPTION PHENOTYPE</scope>
    <scope>INDUCTION</scope>
</reference>
<reference key="6">
    <citation type="journal article" date="2002" name="Cancer Res.">
        <title>Nkx3.1 mutant mice recapitulate early stages of prostate carcinogenesis.</title>
        <authorList>
            <person name="Kim M.J."/>
            <person name="Bhatia-Gaur R."/>
            <person name="Banach-Petrosky W.A."/>
            <person name="Desai N."/>
            <person name="Wang Y."/>
            <person name="Hayward S.W."/>
            <person name="Cunha G.R."/>
            <person name="Cardiff R.D."/>
            <person name="Shen M.M."/>
            <person name="Abate-Shen C."/>
        </authorList>
    </citation>
    <scope>FUNCTION AS TUMOR SUPPRESSOR</scope>
</reference>
<reference key="7">
    <citation type="journal article" date="2006" name="J. Mol. Biol.">
        <title>Physical and functional interactions between the prostate suppressor homeoprotein NKX3.1 and serum response factor.</title>
        <authorList>
            <person name="Ju J.H."/>
            <person name="Maeng J.S."/>
            <person name="Zemedkun M."/>
            <person name="Ahronovitz N."/>
            <person name="Mack J.W."/>
            <person name="Ferretti J.A."/>
            <person name="Gelmann E.P."/>
            <person name="Gruschus J.M."/>
        </authorList>
    </citation>
    <scope>INTERACTION WITH SRF</scope>
</reference>
<reference key="8">
    <citation type="journal article" date="2008" name="Dev. Dyn.">
        <title>Mouse Fem1b interacts with the Nkx3.1 homeoprotein and is required for proper male secondary sexual development.</title>
        <authorList>
            <person name="Wang X."/>
            <person name="Desai N."/>
            <person name="Hu Y.P."/>
            <person name="Price S.M."/>
            <person name="Abate-Shen C."/>
            <person name="Shen M.M."/>
        </authorList>
    </citation>
    <scope>INTERACTION WITH FEM1B</scope>
</reference>
<accession>P97436</accession>
<accession>O09087</accession>
<dbReference type="EMBL" id="U73460">
    <property type="protein sequence ID" value="AAC52956.1"/>
    <property type="molecule type" value="mRNA"/>
</dbReference>
<dbReference type="EMBL" id="U88542">
    <property type="protein sequence ID" value="AAB58025.1"/>
    <property type="molecule type" value="mRNA"/>
</dbReference>
<dbReference type="CCDS" id="CCDS27237.1"/>
<dbReference type="RefSeq" id="NP_035051.1">
    <property type="nucleotide sequence ID" value="NM_010921.3"/>
</dbReference>
<dbReference type="SMR" id="P97436"/>
<dbReference type="BioGRID" id="201781">
    <property type="interactions" value="5"/>
</dbReference>
<dbReference type="FunCoup" id="P97436">
    <property type="interactions" value="1319"/>
</dbReference>
<dbReference type="STRING" id="10090.ENSMUSP00000022646"/>
<dbReference type="iPTMnet" id="P97436"/>
<dbReference type="PhosphoSitePlus" id="P97436"/>
<dbReference type="PaxDb" id="10090-ENSMUSP00000022646"/>
<dbReference type="ProteomicsDB" id="252902"/>
<dbReference type="Antibodypedia" id="9788">
    <property type="antibodies" value="834 antibodies from 40 providers"/>
</dbReference>
<dbReference type="DNASU" id="18095"/>
<dbReference type="Ensembl" id="ENSMUST00000022646.9">
    <property type="protein sequence ID" value="ENSMUSP00000022646.9"/>
    <property type="gene ID" value="ENSMUSG00000022061.9"/>
</dbReference>
<dbReference type="GeneID" id="18095"/>
<dbReference type="KEGG" id="mmu:18095"/>
<dbReference type="UCSC" id="uc007umd.1">
    <property type="organism name" value="mouse"/>
</dbReference>
<dbReference type="AGR" id="MGI:97352"/>
<dbReference type="CTD" id="4824"/>
<dbReference type="MGI" id="MGI:97352">
    <property type="gene designation" value="Nkx3-1"/>
</dbReference>
<dbReference type="VEuPathDB" id="HostDB:ENSMUSG00000022061"/>
<dbReference type="eggNOG" id="KOG0842">
    <property type="taxonomic scope" value="Eukaryota"/>
</dbReference>
<dbReference type="GeneTree" id="ENSGT00940000160930"/>
<dbReference type="HOGENOM" id="CLU_049543_2_0_1"/>
<dbReference type="InParanoid" id="P97436"/>
<dbReference type="OMA" id="DAHFETC"/>
<dbReference type="OrthoDB" id="6159439at2759"/>
<dbReference type="PhylomeDB" id="P97436"/>
<dbReference type="TreeFam" id="TF315720"/>
<dbReference type="BioGRID-ORCS" id="18095">
    <property type="hits" value="2 hits in 79 CRISPR screens"/>
</dbReference>
<dbReference type="PRO" id="PR:P97436"/>
<dbReference type="Proteomes" id="UP000000589">
    <property type="component" value="Chromosome 14"/>
</dbReference>
<dbReference type="RNAct" id="P97436">
    <property type="molecule type" value="protein"/>
</dbReference>
<dbReference type="Bgee" id="ENSMUSG00000022061">
    <property type="expression patterns" value="Expressed in prostate gland ventral lobe and 81 other cell types or tissues"/>
</dbReference>
<dbReference type="ExpressionAtlas" id="P97436">
    <property type="expression patterns" value="baseline and differential"/>
</dbReference>
<dbReference type="GO" id="GO:0005829">
    <property type="term" value="C:cytosol"/>
    <property type="evidence" value="ECO:0007669"/>
    <property type="project" value="Ensembl"/>
</dbReference>
<dbReference type="GO" id="GO:0005654">
    <property type="term" value="C:nucleoplasm"/>
    <property type="evidence" value="ECO:0007669"/>
    <property type="project" value="Ensembl"/>
</dbReference>
<dbReference type="GO" id="GO:0005634">
    <property type="term" value="C:nucleus"/>
    <property type="evidence" value="ECO:0000314"/>
    <property type="project" value="MGI"/>
</dbReference>
<dbReference type="GO" id="GO:0090734">
    <property type="term" value="C:site of DNA damage"/>
    <property type="evidence" value="ECO:0007669"/>
    <property type="project" value="Ensembl"/>
</dbReference>
<dbReference type="GO" id="GO:0008656">
    <property type="term" value="F:cysteine-type endopeptidase activator activity involved in apoptotic process"/>
    <property type="evidence" value="ECO:0007669"/>
    <property type="project" value="Ensembl"/>
</dbReference>
<dbReference type="GO" id="GO:0003677">
    <property type="term" value="F:DNA binding"/>
    <property type="evidence" value="ECO:0000314"/>
    <property type="project" value="MGI"/>
</dbReference>
<dbReference type="GO" id="GO:0003700">
    <property type="term" value="F:DNA-binding transcription factor activity"/>
    <property type="evidence" value="ECO:0000314"/>
    <property type="project" value="MGI"/>
</dbReference>
<dbReference type="GO" id="GO:0000981">
    <property type="term" value="F:DNA-binding transcription factor activity, RNA polymerase II-specific"/>
    <property type="evidence" value="ECO:0000250"/>
    <property type="project" value="UniProtKB"/>
</dbReference>
<dbReference type="GO" id="GO:0140297">
    <property type="term" value="F:DNA-binding transcription factor binding"/>
    <property type="evidence" value="ECO:0000353"/>
    <property type="project" value="UniProtKB"/>
</dbReference>
<dbReference type="GO" id="GO:0042826">
    <property type="term" value="F:histone deacetylase binding"/>
    <property type="evidence" value="ECO:0007669"/>
    <property type="project" value="Ensembl"/>
</dbReference>
<dbReference type="GO" id="GO:0097162">
    <property type="term" value="F:MADS box domain binding"/>
    <property type="evidence" value="ECO:0000314"/>
    <property type="project" value="UniProtKB"/>
</dbReference>
<dbReference type="GO" id="GO:0030331">
    <property type="term" value="F:nuclear estrogen receptor binding"/>
    <property type="evidence" value="ECO:0000250"/>
    <property type="project" value="UniProtKB"/>
</dbReference>
<dbReference type="GO" id="GO:0004879">
    <property type="term" value="F:nuclear receptor activity"/>
    <property type="evidence" value="ECO:0000250"/>
    <property type="project" value="UniProtKB"/>
</dbReference>
<dbReference type="GO" id="GO:0000978">
    <property type="term" value="F:RNA polymerase II cis-regulatory region sequence-specific DNA binding"/>
    <property type="evidence" value="ECO:0000250"/>
    <property type="project" value="UniProtKB"/>
</dbReference>
<dbReference type="GO" id="GO:0043565">
    <property type="term" value="F:sequence-specific DNA binding"/>
    <property type="evidence" value="ECO:0000314"/>
    <property type="project" value="UniProtKB"/>
</dbReference>
<dbReference type="GO" id="GO:0000976">
    <property type="term" value="F:transcription cis-regulatory region binding"/>
    <property type="evidence" value="ECO:0000250"/>
    <property type="project" value="UniProtKB"/>
</dbReference>
<dbReference type="GO" id="GO:0140416">
    <property type="term" value="F:transcription regulator inhibitor activity"/>
    <property type="evidence" value="ECO:0000250"/>
    <property type="project" value="UniProtKB"/>
</dbReference>
<dbReference type="GO" id="GO:0030521">
    <property type="term" value="P:androgen receptor signaling pathway"/>
    <property type="evidence" value="ECO:0000250"/>
    <property type="project" value="UniProtKB"/>
</dbReference>
<dbReference type="GO" id="GO:0060442">
    <property type="term" value="P:branching involved in prostate gland morphogenesis"/>
    <property type="evidence" value="ECO:0000315"/>
    <property type="project" value="MGI"/>
</dbReference>
<dbReference type="GO" id="GO:0048754">
    <property type="term" value="P:branching morphogenesis of an epithelial tube"/>
    <property type="evidence" value="ECO:0000315"/>
    <property type="project" value="MGI"/>
</dbReference>
<dbReference type="GO" id="GO:0071456">
    <property type="term" value="P:cellular response to hypoxia"/>
    <property type="evidence" value="ECO:0007669"/>
    <property type="project" value="Ensembl"/>
</dbReference>
<dbReference type="GO" id="GO:0071347">
    <property type="term" value="P:cellular response to interleukin-1"/>
    <property type="evidence" value="ECO:0007669"/>
    <property type="project" value="Ensembl"/>
</dbReference>
<dbReference type="GO" id="GO:0071383">
    <property type="term" value="P:cellular response to steroid hormone stimulus"/>
    <property type="evidence" value="ECO:0000250"/>
    <property type="project" value="UniProtKB"/>
</dbReference>
<dbReference type="GO" id="GO:0071356">
    <property type="term" value="P:cellular response to tumor necrosis factor"/>
    <property type="evidence" value="ECO:0007669"/>
    <property type="project" value="Ensembl"/>
</dbReference>
<dbReference type="GO" id="GO:0071466">
    <property type="term" value="P:cellular response to xenobiotic stimulus"/>
    <property type="evidence" value="ECO:0007669"/>
    <property type="project" value="Ensembl"/>
</dbReference>
<dbReference type="GO" id="GO:0006974">
    <property type="term" value="P:DNA damage response"/>
    <property type="evidence" value="ECO:0000250"/>
    <property type="project" value="UniProtKB"/>
</dbReference>
<dbReference type="GO" id="GO:0035907">
    <property type="term" value="P:dorsal aorta development"/>
    <property type="evidence" value="ECO:0000270"/>
    <property type="project" value="UniProtKB"/>
</dbReference>
<dbReference type="GO" id="GO:0050673">
    <property type="term" value="P:epithelial cell proliferation"/>
    <property type="evidence" value="ECO:0000315"/>
    <property type="project" value="MGI"/>
</dbReference>
<dbReference type="GO" id="GO:0060767">
    <property type="term" value="P:epithelial cell proliferation involved in prostate gland development"/>
    <property type="evidence" value="ECO:0000315"/>
    <property type="project" value="MGI"/>
</dbReference>
<dbReference type="GO" id="GO:0060664">
    <property type="term" value="P:epithelial cell proliferation involved in salivary gland morphogenesis"/>
    <property type="evidence" value="ECO:0000315"/>
    <property type="project" value="MGI"/>
</dbReference>
<dbReference type="GO" id="GO:0007507">
    <property type="term" value="P:heart development"/>
    <property type="evidence" value="ECO:0000270"/>
    <property type="project" value="BHF-UCL"/>
</dbReference>
<dbReference type="GO" id="GO:0035260">
    <property type="term" value="P:internal genitalia morphogenesis"/>
    <property type="evidence" value="ECO:0000304"/>
    <property type="project" value="BHF-UCL"/>
</dbReference>
<dbReference type="GO" id="GO:0008584">
    <property type="term" value="P:male gonad development"/>
    <property type="evidence" value="ECO:0000270"/>
    <property type="project" value="UniProtKB"/>
</dbReference>
<dbReference type="GO" id="GO:0001656">
    <property type="term" value="P:metanephros development"/>
    <property type="evidence" value="ECO:0000270"/>
    <property type="project" value="UniProtKB"/>
</dbReference>
<dbReference type="GO" id="GO:0008285">
    <property type="term" value="P:negative regulation of cell population proliferation"/>
    <property type="evidence" value="ECO:0000316"/>
    <property type="project" value="MGI"/>
</dbReference>
<dbReference type="GO" id="GO:0045892">
    <property type="term" value="P:negative regulation of DNA-templated transcription"/>
    <property type="evidence" value="ECO:0000250"/>
    <property type="project" value="UniProtKB"/>
</dbReference>
<dbReference type="GO" id="GO:0050680">
    <property type="term" value="P:negative regulation of epithelial cell proliferation"/>
    <property type="evidence" value="ECO:0000315"/>
    <property type="project" value="MGI"/>
</dbReference>
<dbReference type="GO" id="GO:0060770">
    <property type="term" value="P:negative regulation of epithelial cell proliferation involved in prostate gland development"/>
    <property type="evidence" value="ECO:0000315"/>
    <property type="project" value="MGI"/>
</dbReference>
<dbReference type="GO" id="GO:0010629">
    <property type="term" value="P:negative regulation of gene expression"/>
    <property type="evidence" value="ECO:0007669"/>
    <property type="project" value="Ensembl"/>
</dbReference>
<dbReference type="GO" id="GO:0043569">
    <property type="term" value="P:negative regulation of insulin-like growth factor receptor signaling pathway"/>
    <property type="evidence" value="ECO:0000314"/>
    <property type="project" value="MGI"/>
</dbReference>
<dbReference type="GO" id="GO:0000122">
    <property type="term" value="P:negative regulation of transcription by RNA polymerase II"/>
    <property type="evidence" value="ECO:0000315"/>
    <property type="project" value="UniProtKB"/>
</dbReference>
<dbReference type="GO" id="GO:0060037">
    <property type="term" value="P:pharyngeal system development"/>
    <property type="evidence" value="ECO:0000270"/>
    <property type="project" value="BHF-UCL"/>
</dbReference>
<dbReference type="GO" id="GO:2000836">
    <property type="term" value="P:positive regulation of androgen secretion"/>
    <property type="evidence" value="ECO:0000250"/>
    <property type="project" value="UniProtKB"/>
</dbReference>
<dbReference type="GO" id="GO:0051781">
    <property type="term" value="P:positive regulation of cell division"/>
    <property type="evidence" value="ECO:0000250"/>
    <property type="project" value="UniProtKB"/>
</dbReference>
<dbReference type="GO" id="GO:0008284">
    <property type="term" value="P:positive regulation of cell population proliferation"/>
    <property type="evidence" value="ECO:0000250"/>
    <property type="project" value="UniProtKB"/>
</dbReference>
<dbReference type="GO" id="GO:0045893">
    <property type="term" value="P:positive regulation of DNA-templated transcription"/>
    <property type="evidence" value="ECO:0000314"/>
    <property type="project" value="MGI"/>
</dbReference>
<dbReference type="GO" id="GO:0010628">
    <property type="term" value="P:positive regulation of gene expression"/>
    <property type="evidence" value="ECO:0000250"/>
    <property type="project" value="UniProtKB"/>
</dbReference>
<dbReference type="GO" id="GO:2001244">
    <property type="term" value="P:positive regulation of intrinsic apoptotic signaling pathway"/>
    <property type="evidence" value="ECO:0000250"/>
    <property type="project" value="UniProtKB"/>
</dbReference>
<dbReference type="GO" id="GO:0045931">
    <property type="term" value="P:positive regulation of mitotic cell cycle"/>
    <property type="evidence" value="ECO:0000250"/>
    <property type="project" value="UniProtKB"/>
</dbReference>
<dbReference type="GO" id="GO:0051897">
    <property type="term" value="P:positive regulation of phosphatidylinositol 3-kinase/protein kinase B signal transduction"/>
    <property type="evidence" value="ECO:0000250"/>
    <property type="project" value="UniProtKB"/>
</dbReference>
<dbReference type="GO" id="GO:0045944">
    <property type="term" value="P:positive regulation of transcription by RNA polymerase II"/>
    <property type="evidence" value="ECO:0000250"/>
    <property type="project" value="UniProtKB"/>
</dbReference>
<dbReference type="GO" id="GO:0030850">
    <property type="term" value="P:prostate gland development"/>
    <property type="evidence" value="ECO:0000270"/>
    <property type="project" value="UniProtKB"/>
</dbReference>
<dbReference type="GO" id="GO:0032880">
    <property type="term" value="P:regulation of protein localization"/>
    <property type="evidence" value="ECO:0007669"/>
    <property type="project" value="Ensembl"/>
</dbReference>
<dbReference type="GO" id="GO:0033574">
    <property type="term" value="P:response to testosterone"/>
    <property type="evidence" value="ECO:0000315"/>
    <property type="project" value="UniProtKB"/>
</dbReference>
<dbReference type="GO" id="GO:0007431">
    <property type="term" value="P:salivary gland development"/>
    <property type="evidence" value="ECO:0000315"/>
    <property type="project" value="MGI"/>
</dbReference>
<dbReference type="GO" id="GO:0001756">
    <property type="term" value="P:somitogenesis"/>
    <property type="evidence" value="ECO:0000270"/>
    <property type="project" value="BHF-UCL"/>
</dbReference>
<dbReference type="GO" id="GO:0001655">
    <property type="term" value="P:urogenital system development"/>
    <property type="evidence" value="ECO:0000270"/>
    <property type="project" value="UniProtKB"/>
</dbReference>
<dbReference type="CDD" id="cd00086">
    <property type="entry name" value="homeodomain"/>
    <property type="match status" value="1"/>
</dbReference>
<dbReference type="FunFam" id="1.10.10.60:FF:000426">
    <property type="entry name" value="NK3 homeobox 1"/>
    <property type="match status" value="1"/>
</dbReference>
<dbReference type="Gene3D" id="1.10.10.60">
    <property type="entry name" value="Homeodomain-like"/>
    <property type="match status" value="1"/>
</dbReference>
<dbReference type="InterPro" id="IPR001356">
    <property type="entry name" value="HD"/>
</dbReference>
<dbReference type="InterPro" id="IPR020479">
    <property type="entry name" value="HD_metazoa"/>
</dbReference>
<dbReference type="InterPro" id="IPR017970">
    <property type="entry name" value="Homeobox_CS"/>
</dbReference>
<dbReference type="InterPro" id="IPR050394">
    <property type="entry name" value="Homeobox_NK-like"/>
</dbReference>
<dbReference type="InterPro" id="IPR009057">
    <property type="entry name" value="Homeodomain-like_sf"/>
</dbReference>
<dbReference type="PANTHER" id="PTHR24340">
    <property type="entry name" value="HOMEOBOX PROTEIN NKX"/>
    <property type="match status" value="1"/>
</dbReference>
<dbReference type="PANTHER" id="PTHR24340:SF38">
    <property type="entry name" value="HOMEOBOX PROTEIN NKX-3.1"/>
    <property type="match status" value="1"/>
</dbReference>
<dbReference type="Pfam" id="PF00046">
    <property type="entry name" value="Homeodomain"/>
    <property type="match status" value="1"/>
</dbReference>
<dbReference type="PRINTS" id="PR00024">
    <property type="entry name" value="HOMEOBOX"/>
</dbReference>
<dbReference type="SMART" id="SM00389">
    <property type="entry name" value="HOX"/>
    <property type="match status" value="1"/>
</dbReference>
<dbReference type="SUPFAM" id="SSF46689">
    <property type="entry name" value="Homeodomain-like"/>
    <property type="match status" value="1"/>
</dbReference>
<dbReference type="PROSITE" id="PS00027">
    <property type="entry name" value="HOMEOBOX_1"/>
    <property type="match status" value="1"/>
</dbReference>
<dbReference type="PROSITE" id="PS50071">
    <property type="entry name" value="HOMEOBOX_2"/>
    <property type="match status" value="1"/>
</dbReference>
<organism>
    <name type="scientific">Mus musculus</name>
    <name type="common">Mouse</name>
    <dbReference type="NCBI Taxonomy" id="10090"/>
    <lineage>
        <taxon>Eukaryota</taxon>
        <taxon>Metazoa</taxon>
        <taxon>Chordata</taxon>
        <taxon>Craniata</taxon>
        <taxon>Vertebrata</taxon>
        <taxon>Euteleostomi</taxon>
        <taxon>Mammalia</taxon>
        <taxon>Eutheria</taxon>
        <taxon>Euarchontoglires</taxon>
        <taxon>Glires</taxon>
        <taxon>Rodentia</taxon>
        <taxon>Myomorpha</taxon>
        <taxon>Muroidea</taxon>
        <taxon>Muridae</taxon>
        <taxon>Murinae</taxon>
        <taxon>Mus</taxon>
        <taxon>Mus</taxon>
    </lineage>
</organism>
<feature type="chain" id="PRO_0000048946" description="Homeobox protein Nkx-3.1">
    <location>
        <begin position="1"/>
        <end position="237"/>
    </location>
</feature>
<feature type="DNA-binding region" description="Homeobox" evidence="2">
    <location>
        <begin position="125"/>
        <end position="184"/>
    </location>
</feature>
<feature type="region of interest" description="Disordered" evidence="3">
    <location>
        <begin position="1"/>
        <end position="96"/>
    </location>
</feature>
<feature type="region of interest" description="Disordered" evidence="3">
    <location>
        <begin position="108"/>
        <end position="130"/>
    </location>
</feature>
<feature type="compositionally biased region" description="Basic and acidic residues" evidence="3">
    <location>
        <begin position="1"/>
        <end position="14"/>
    </location>
</feature>
<feature type="compositionally biased region" description="Polar residues" evidence="3">
    <location>
        <begin position="24"/>
        <end position="34"/>
    </location>
</feature>
<feature type="compositionally biased region" description="Basic and acidic residues" evidence="3">
    <location>
        <begin position="38"/>
        <end position="47"/>
    </location>
</feature>
<feature type="compositionally biased region" description="Basic and acidic residues" evidence="3">
    <location>
        <begin position="57"/>
        <end position="71"/>
    </location>
</feature>
<evidence type="ECO:0000250" key="1">
    <source>
        <dbReference type="UniProtKB" id="Q99801"/>
    </source>
</evidence>
<evidence type="ECO:0000255" key="2">
    <source>
        <dbReference type="PROSITE-ProRule" id="PRU00108"/>
    </source>
</evidence>
<evidence type="ECO:0000256" key="3">
    <source>
        <dbReference type="SAM" id="MobiDB-lite"/>
    </source>
</evidence>
<evidence type="ECO:0000269" key="4">
    <source>
    </source>
</evidence>
<evidence type="ECO:0000269" key="5">
    <source>
    </source>
</evidence>
<evidence type="ECO:0000269" key="6">
    <source>
    </source>
</evidence>
<evidence type="ECO:0000269" key="7">
    <source>
    </source>
</evidence>
<evidence type="ECO:0000269" key="8">
    <source>
    </source>
</evidence>
<evidence type="ECO:0000269" key="9">
    <source>
    </source>
</evidence>
<evidence type="ECO:0000269" key="10">
    <source>
    </source>
</evidence>
<evidence type="ECO:0000269" key="11">
    <source>
    </source>
</evidence>
<evidence type="ECO:0000303" key="12">
    <source>
    </source>
</evidence>
<evidence type="ECO:0000305" key="13"/>
<evidence type="ECO:0000312" key="14">
    <source>
        <dbReference type="MGI" id="MGI:97352"/>
    </source>
</evidence>
<name>NKX31_MOUSE</name>
<sequence length="237" mass="26824">MLRVAEPREPRVEAGGRSPWAAPPTQSKRLTSFLIQDILRDRAERHGGHSGNPQHSPDPRRDSAPEPDKAGGRGVAPEDPPSIRHSPAETPTEPESDAHFETYLLDCEHNPGDLASAPQVTKQPQKRSRAAFSHTQVIELERKFSHQKYLSAPERAHLAKNLKLTETQVKIWFQNRRYKTKRKQLSEDLGVLEKNSPLSLPALKDDSLPSTSLVSVYTSYPYYPYLYCLGSWHPSFW</sequence>
<proteinExistence type="evidence at protein level"/>